<feature type="propeptide" id="PRO_0000397572" description="Removed in mature form; by autocatalysis" evidence="1">
    <location>
        <begin position="1"/>
        <end position="56"/>
    </location>
</feature>
<feature type="chain" id="PRO_0000397573" description="Proteasome subunit beta">
    <location>
        <begin position="57"/>
        <end position="284"/>
    </location>
</feature>
<feature type="active site" description="Nucleophile" evidence="1">
    <location>
        <position position="57"/>
    </location>
</feature>
<keyword id="KW-0068">Autocatalytic cleavage</keyword>
<keyword id="KW-0963">Cytoplasm</keyword>
<keyword id="KW-0378">Hydrolase</keyword>
<keyword id="KW-0645">Protease</keyword>
<keyword id="KW-0647">Proteasome</keyword>
<keyword id="KW-1185">Reference proteome</keyword>
<keyword id="KW-0888">Threonine protease</keyword>
<keyword id="KW-0865">Zymogen</keyword>
<gene>
    <name evidence="1" type="primary">prcB</name>
    <name type="ordered locus">SACE_2251</name>
</gene>
<evidence type="ECO:0000255" key="1">
    <source>
        <dbReference type="HAMAP-Rule" id="MF_02113"/>
    </source>
</evidence>
<accession>A4FBY1</accession>
<reference key="1">
    <citation type="journal article" date="2007" name="Nat. Biotechnol.">
        <title>Complete genome sequence of the erythromycin-producing bacterium Saccharopolyspora erythraea NRRL23338.</title>
        <authorList>
            <person name="Oliynyk M."/>
            <person name="Samborskyy M."/>
            <person name="Lester J.B."/>
            <person name="Mironenko T."/>
            <person name="Scott N."/>
            <person name="Dickens S."/>
            <person name="Haydock S.F."/>
            <person name="Leadlay P.F."/>
        </authorList>
    </citation>
    <scope>NUCLEOTIDE SEQUENCE [LARGE SCALE GENOMIC DNA]</scope>
    <source>
        <strain>ATCC 11635 / DSM 40517 / JCM 4748 / NBRC 13426 / NCIMB 8594 / NRRL 2338</strain>
    </source>
</reference>
<proteinExistence type="inferred from homology"/>
<organism>
    <name type="scientific">Saccharopolyspora erythraea (strain ATCC 11635 / DSM 40517 / JCM 4748 / NBRC 13426 / NCIMB 8594 / NRRL 2338)</name>
    <dbReference type="NCBI Taxonomy" id="405948"/>
    <lineage>
        <taxon>Bacteria</taxon>
        <taxon>Bacillati</taxon>
        <taxon>Actinomycetota</taxon>
        <taxon>Actinomycetes</taxon>
        <taxon>Pseudonocardiales</taxon>
        <taxon>Pseudonocardiaceae</taxon>
        <taxon>Saccharopolyspora</taxon>
    </lineage>
</organism>
<protein>
    <recommendedName>
        <fullName evidence="1">Proteasome subunit beta</fullName>
        <ecNumber evidence="1">3.4.25.1</ecNumber>
    </recommendedName>
    <alternativeName>
        <fullName evidence="1">20S proteasome beta subunit</fullName>
    </alternativeName>
    <alternativeName>
        <fullName evidence="1">Proteasome core protein PrcB</fullName>
    </alternativeName>
</protein>
<sequence>MSPMESSSTRFPGQALPAAYLTPGSSSFTDFLRVAAPELMPGSRPVPDGAVEAPHGTTIVALTFRGGVLLAGDRRATMGNLIAQRDMEKLYVTDDYSAVGIAGTAGIALEMVRLYAIELEHYEKLEGVSLSLDGKANKLATMLRGNLQGAMAGLAVLPLFAGFDVDADDPDRAGRIVSYDITGGRYNELGGYYAVGSGSLFAKSALKKRFDPDADVDTAVRAAVEALYDAADDDTATGGPDLSRRIYPSIITITGTDGATRVPEERAAEIATEVVNGRMQNPGG</sequence>
<dbReference type="EC" id="3.4.25.1" evidence="1"/>
<dbReference type="EMBL" id="AM420293">
    <property type="protein sequence ID" value="CAM01556.1"/>
    <property type="molecule type" value="Genomic_DNA"/>
</dbReference>
<dbReference type="SMR" id="A4FBY1"/>
<dbReference type="STRING" id="405948.SACE_2251"/>
<dbReference type="MEROPS" id="T01.005"/>
<dbReference type="KEGG" id="sen:SACE_2251"/>
<dbReference type="eggNOG" id="COG0638">
    <property type="taxonomic scope" value="Bacteria"/>
</dbReference>
<dbReference type="HOGENOM" id="CLU_035750_2_0_11"/>
<dbReference type="UniPathway" id="UPA00997"/>
<dbReference type="Proteomes" id="UP000006728">
    <property type="component" value="Chromosome"/>
</dbReference>
<dbReference type="GO" id="GO:0005737">
    <property type="term" value="C:cytoplasm"/>
    <property type="evidence" value="ECO:0007669"/>
    <property type="project" value="UniProtKB-SubCell"/>
</dbReference>
<dbReference type="GO" id="GO:0019774">
    <property type="term" value="C:proteasome core complex, beta-subunit complex"/>
    <property type="evidence" value="ECO:0007669"/>
    <property type="project" value="UniProtKB-UniRule"/>
</dbReference>
<dbReference type="GO" id="GO:0004298">
    <property type="term" value="F:threonine-type endopeptidase activity"/>
    <property type="evidence" value="ECO:0007669"/>
    <property type="project" value="UniProtKB-UniRule"/>
</dbReference>
<dbReference type="GO" id="GO:0019941">
    <property type="term" value="P:modification-dependent protein catabolic process"/>
    <property type="evidence" value="ECO:0007669"/>
    <property type="project" value="UniProtKB-UniRule"/>
</dbReference>
<dbReference type="GO" id="GO:0010498">
    <property type="term" value="P:proteasomal protein catabolic process"/>
    <property type="evidence" value="ECO:0007669"/>
    <property type="project" value="UniProtKB-UniRule"/>
</dbReference>
<dbReference type="CDD" id="cd01906">
    <property type="entry name" value="proteasome_protease_HslV"/>
    <property type="match status" value="1"/>
</dbReference>
<dbReference type="Gene3D" id="3.60.20.10">
    <property type="entry name" value="Glutamine Phosphoribosylpyrophosphate, subunit 1, domain 1"/>
    <property type="match status" value="1"/>
</dbReference>
<dbReference type="HAMAP" id="MF_02113_B">
    <property type="entry name" value="Proteasome_B_B"/>
    <property type="match status" value="1"/>
</dbReference>
<dbReference type="InterPro" id="IPR029055">
    <property type="entry name" value="Ntn_hydrolases_N"/>
</dbReference>
<dbReference type="InterPro" id="IPR001353">
    <property type="entry name" value="Proteasome_sua/b"/>
</dbReference>
<dbReference type="InterPro" id="IPR023333">
    <property type="entry name" value="Proteasome_suB-type"/>
</dbReference>
<dbReference type="InterPro" id="IPR022483">
    <property type="entry name" value="PSB_actinobac"/>
</dbReference>
<dbReference type="NCBIfam" id="TIGR03690">
    <property type="entry name" value="20S_bact_beta"/>
    <property type="match status" value="1"/>
</dbReference>
<dbReference type="PANTHER" id="PTHR32194:SF0">
    <property type="entry name" value="ATP-DEPENDENT PROTEASE SUBUNIT HSLV"/>
    <property type="match status" value="1"/>
</dbReference>
<dbReference type="PANTHER" id="PTHR32194">
    <property type="entry name" value="METALLOPROTEASE TLDD"/>
    <property type="match status" value="1"/>
</dbReference>
<dbReference type="Pfam" id="PF00227">
    <property type="entry name" value="Proteasome"/>
    <property type="match status" value="1"/>
</dbReference>
<dbReference type="SUPFAM" id="SSF56235">
    <property type="entry name" value="N-terminal nucleophile aminohydrolases (Ntn hydrolases)"/>
    <property type="match status" value="1"/>
</dbReference>
<dbReference type="PROSITE" id="PS51476">
    <property type="entry name" value="PROTEASOME_BETA_2"/>
    <property type="match status" value="1"/>
</dbReference>
<comment type="function">
    <text evidence="1">Component of the proteasome core, a large protease complex with broad specificity involved in protein degradation.</text>
</comment>
<comment type="catalytic activity">
    <reaction evidence="1">
        <text>Cleavage of peptide bonds with very broad specificity.</text>
        <dbReference type="EC" id="3.4.25.1"/>
    </reaction>
</comment>
<comment type="activity regulation">
    <text evidence="1">The formation of the proteasomal ATPase ARC-20S proteasome complex, likely via the docking of the C-termini of ARC into the intersubunit pockets in the alpha-rings, may trigger opening of the gate for substrate entry. Interconversion between the open-gate and close-gate conformations leads to a dynamic regulation of the 20S proteasome proteolysis activity.</text>
</comment>
<comment type="pathway">
    <text evidence="1">Protein degradation; proteasomal Pup-dependent pathway.</text>
</comment>
<comment type="subunit">
    <text evidence="1">The 20S proteasome core is composed of 14 alpha and 14 beta subunits that assemble into four stacked heptameric rings, resulting in a barrel-shaped structure. The two inner rings, each composed of seven catalytic beta subunits, are sandwiched by two outer rings, each composed of seven alpha subunits. The catalytic chamber with the active sites is on the inside of the barrel. Has a gated structure, the ends of the cylinder being occluded by the N-termini of the alpha-subunits. Is capped by the proteasome-associated ATPase, ARC.</text>
</comment>
<comment type="subcellular location">
    <subcellularLocation>
        <location evidence="1">Cytoplasm</location>
    </subcellularLocation>
</comment>
<comment type="similarity">
    <text evidence="1">Belongs to the peptidase T1B family.</text>
</comment>
<name>PSB_SACEN</name>